<accession>Q7NSK7</accession>
<sequence length="319" mass="33557">MGYSRILGTGSFLPSQVLTNAQLAERVETSDEWIVSRTGIRARHIADEGHKTSDLALRAAQAAIASAGIDKGEIDLIIVATTTPDMVFPSTACILQEKLGLPGVQAFDVQAVCAGFVYALTTANAYIKSGLAKKALVVGAEIMSRVLDWDDRRTCVLFGDGAGAVVLGESDEPGILHAKLAADGRYQGLLNTPAQISGGKIQGIPYLHMDGPAVFKFAVKSLSEIATATLAEAGVEQASLDWLVPHQANLRIIESTAKHLGLPMDKVVVTLPEQGNTSAASIPLALDVAVRDGRIRRGQTVMLEGIGGGFAWGAVLLTF</sequence>
<proteinExistence type="inferred from homology"/>
<keyword id="KW-0012">Acyltransferase</keyword>
<keyword id="KW-0963">Cytoplasm</keyword>
<keyword id="KW-0275">Fatty acid biosynthesis</keyword>
<keyword id="KW-0276">Fatty acid metabolism</keyword>
<keyword id="KW-0444">Lipid biosynthesis</keyword>
<keyword id="KW-0443">Lipid metabolism</keyword>
<keyword id="KW-0511">Multifunctional enzyme</keyword>
<keyword id="KW-1185">Reference proteome</keyword>
<keyword id="KW-0808">Transferase</keyword>
<feature type="chain" id="PRO_0000110417" description="Beta-ketoacyl-[acyl-carrier-protein] synthase III">
    <location>
        <begin position="1"/>
        <end position="319"/>
    </location>
</feature>
<feature type="region of interest" description="ACP-binding" evidence="1">
    <location>
        <begin position="247"/>
        <end position="251"/>
    </location>
</feature>
<feature type="active site" evidence="1">
    <location>
        <position position="113"/>
    </location>
</feature>
<feature type="active site" evidence="1">
    <location>
        <position position="246"/>
    </location>
</feature>
<feature type="active site" evidence="1">
    <location>
        <position position="276"/>
    </location>
</feature>
<protein>
    <recommendedName>
        <fullName evidence="1">Beta-ketoacyl-[acyl-carrier-protein] synthase III</fullName>
        <shortName evidence="1">Beta-ketoacyl-ACP synthase III</shortName>
        <shortName evidence="1">KAS III</shortName>
        <ecNumber evidence="1">2.3.1.180</ecNumber>
    </recommendedName>
    <alternativeName>
        <fullName evidence="1">3-oxoacyl-[acyl-carrier-protein] synthase 3</fullName>
    </alternativeName>
    <alternativeName>
        <fullName evidence="1">3-oxoacyl-[acyl-carrier-protein] synthase III</fullName>
    </alternativeName>
</protein>
<dbReference type="EC" id="2.3.1.180" evidence="1"/>
<dbReference type="EMBL" id="AE016825">
    <property type="protein sequence ID" value="AAQ61080.1"/>
    <property type="molecule type" value="Genomic_DNA"/>
</dbReference>
<dbReference type="RefSeq" id="WP_011136963.1">
    <property type="nucleotide sequence ID" value="NC_005085.1"/>
</dbReference>
<dbReference type="SMR" id="Q7NSK7"/>
<dbReference type="STRING" id="243365.CV_3416"/>
<dbReference type="GeneID" id="66364637"/>
<dbReference type="KEGG" id="cvi:CV_3416"/>
<dbReference type="eggNOG" id="COG0332">
    <property type="taxonomic scope" value="Bacteria"/>
</dbReference>
<dbReference type="HOGENOM" id="CLU_039592_3_1_4"/>
<dbReference type="OrthoDB" id="9815506at2"/>
<dbReference type="UniPathway" id="UPA00094"/>
<dbReference type="Proteomes" id="UP000001424">
    <property type="component" value="Chromosome"/>
</dbReference>
<dbReference type="GO" id="GO:0005737">
    <property type="term" value="C:cytoplasm"/>
    <property type="evidence" value="ECO:0007669"/>
    <property type="project" value="UniProtKB-SubCell"/>
</dbReference>
<dbReference type="GO" id="GO:0004315">
    <property type="term" value="F:3-oxoacyl-[acyl-carrier-protein] synthase activity"/>
    <property type="evidence" value="ECO:0007669"/>
    <property type="project" value="InterPro"/>
</dbReference>
<dbReference type="GO" id="GO:0033818">
    <property type="term" value="F:beta-ketoacyl-acyl-carrier-protein synthase III activity"/>
    <property type="evidence" value="ECO:0007669"/>
    <property type="project" value="UniProtKB-UniRule"/>
</dbReference>
<dbReference type="GO" id="GO:0006633">
    <property type="term" value="P:fatty acid biosynthetic process"/>
    <property type="evidence" value="ECO:0007669"/>
    <property type="project" value="UniProtKB-UniRule"/>
</dbReference>
<dbReference type="CDD" id="cd00830">
    <property type="entry name" value="KAS_III"/>
    <property type="match status" value="1"/>
</dbReference>
<dbReference type="FunFam" id="3.40.47.10:FF:000004">
    <property type="entry name" value="3-oxoacyl-[acyl-carrier-protein] synthase 3"/>
    <property type="match status" value="1"/>
</dbReference>
<dbReference type="Gene3D" id="3.40.47.10">
    <property type="match status" value="1"/>
</dbReference>
<dbReference type="HAMAP" id="MF_01815">
    <property type="entry name" value="FabH"/>
    <property type="match status" value="1"/>
</dbReference>
<dbReference type="InterPro" id="IPR013747">
    <property type="entry name" value="ACP_syn_III_C"/>
</dbReference>
<dbReference type="InterPro" id="IPR013751">
    <property type="entry name" value="ACP_syn_III_N"/>
</dbReference>
<dbReference type="InterPro" id="IPR004655">
    <property type="entry name" value="FabH"/>
</dbReference>
<dbReference type="InterPro" id="IPR016039">
    <property type="entry name" value="Thiolase-like"/>
</dbReference>
<dbReference type="NCBIfam" id="TIGR00747">
    <property type="entry name" value="fabH"/>
    <property type="match status" value="1"/>
</dbReference>
<dbReference type="NCBIfam" id="NF006829">
    <property type="entry name" value="PRK09352.1"/>
    <property type="match status" value="1"/>
</dbReference>
<dbReference type="PANTHER" id="PTHR43091">
    <property type="entry name" value="3-OXOACYL-[ACYL-CARRIER-PROTEIN] SYNTHASE"/>
    <property type="match status" value="1"/>
</dbReference>
<dbReference type="PANTHER" id="PTHR43091:SF1">
    <property type="entry name" value="BETA-KETOACYL-[ACYL-CARRIER-PROTEIN] SYNTHASE III, CHLOROPLASTIC"/>
    <property type="match status" value="1"/>
</dbReference>
<dbReference type="Pfam" id="PF08545">
    <property type="entry name" value="ACP_syn_III"/>
    <property type="match status" value="1"/>
</dbReference>
<dbReference type="Pfam" id="PF08541">
    <property type="entry name" value="ACP_syn_III_C"/>
    <property type="match status" value="1"/>
</dbReference>
<dbReference type="SUPFAM" id="SSF53901">
    <property type="entry name" value="Thiolase-like"/>
    <property type="match status" value="1"/>
</dbReference>
<evidence type="ECO:0000255" key="1">
    <source>
        <dbReference type="HAMAP-Rule" id="MF_01815"/>
    </source>
</evidence>
<organism>
    <name type="scientific">Chromobacterium violaceum (strain ATCC 12472 / DSM 30191 / JCM 1249 / CCUG 213 / NBRC 12614 / NCIMB 9131 / NCTC 9757 / MK)</name>
    <dbReference type="NCBI Taxonomy" id="243365"/>
    <lineage>
        <taxon>Bacteria</taxon>
        <taxon>Pseudomonadati</taxon>
        <taxon>Pseudomonadota</taxon>
        <taxon>Betaproteobacteria</taxon>
        <taxon>Neisseriales</taxon>
        <taxon>Chromobacteriaceae</taxon>
        <taxon>Chromobacterium</taxon>
    </lineage>
</organism>
<reference key="1">
    <citation type="journal article" date="2003" name="Proc. Natl. Acad. Sci. U.S.A.">
        <title>The complete genome sequence of Chromobacterium violaceum reveals remarkable and exploitable bacterial adaptability.</title>
        <authorList>
            <person name="Vasconcelos A.T.R."/>
            <person name="de Almeida D.F."/>
            <person name="Hungria M."/>
            <person name="Guimaraes C.T."/>
            <person name="Antonio R.V."/>
            <person name="Almeida F.C."/>
            <person name="de Almeida L.G.P."/>
            <person name="de Almeida R."/>
            <person name="Alves-Gomes J.A."/>
            <person name="Andrade E.M."/>
            <person name="Araripe J."/>
            <person name="de Araujo M.F.F."/>
            <person name="Astolfi-Filho S."/>
            <person name="Azevedo V."/>
            <person name="Baptista A.J."/>
            <person name="Bataus L.A.M."/>
            <person name="Batista J.S."/>
            <person name="Belo A."/>
            <person name="van den Berg C."/>
            <person name="Bogo M."/>
            <person name="Bonatto S."/>
            <person name="Bordignon J."/>
            <person name="Brigido M.M."/>
            <person name="Brito C.A."/>
            <person name="Brocchi M."/>
            <person name="Burity H.A."/>
            <person name="Camargo A.A."/>
            <person name="Cardoso D.D.P."/>
            <person name="Carneiro N.P."/>
            <person name="Carraro D.M."/>
            <person name="Carvalho C.M.B."/>
            <person name="Cascardo J.C.M."/>
            <person name="Cavada B.S."/>
            <person name="Chueire L.M.O."/>
            <person name="Creczynski-Pasa T.B."/>
            <person name="Cunha-Junior N.C."/>
            <person name="Fagundes N."/>
            <person name="Falcao C.L."/>
            <person name="Fantinatti F."/>
            <person name="Farias I.P."/>
            <person name="Felipe M.S.S."/>
            <person name="Ferrari L.P."/>
            <person name="Ferro J.A."/>
            <person name="Ferro M.I.T."/>
            <person name="Franco G.R."/>
            <person name="Freitas N.S.A."/>
            <person name="Furlan L.R."/>
            <person name="Gazzinelli R.T."/>
            <person name="Gomes E.A."/>
            <person name="Goncalves P.R."/>
            <person name="Grangeiro T.B."/>
            <person name="Grattapaglia D."/>
            <person name="Grisard E.C."/>
            <person name="Hanna E.S."/>
            <person name="Jardim S.N."/>
            <person name="Laurino J."/>
            <person name="Leoi L.C.T."/>
            <person name="Lima L.F.A."/>
            <person name="Loureiro M.F."/>
            <person name="Lyra M.C.C.P."/>
            <person name="Madeira H.M.F."/>
            <person name="Manfio G.P."/>
            <person name="Maranhao A.Q."/>
            <person name="Martins W.S."/>
            <person name="di Mauro S.M.Z."/>
            <person name="de Medeiros S.R.B."/>
            <person name="Meissner R.V."/>
            <person name="Moreira M.A.M."/>
            <person name="Nascimento F.F."/>
            <person name="Nicolas M.F."/>
            <person name="Oliveira J.G."/>
            <person name="Oliveira S.C."/>
            <person name="Paixao R.F.C."/>
            <person name="Parente J.A."/>
            <person name="Pedrosa F.O."/>
            <person name="Pena S.D.J."/>
            <person name="Pereira J.O."/>
            <person name="Pereira M."/>
            <person name="Pinto L.S.R.C."/>
            <person name="Pinto L.S."/>
            <person name="Porto J.I.R."/>
            <person name="Potrich D.P."/>
            <person name="Ramalho-Neto C.E."/>
            <person name="Reis A.M.M."/>
            <person name="Rigo L.U."/>
            <person name="Rondinelli E."/>
            <person name="Santos E.B.P."/>
            <person name="Santos F.R."/>
            <person name="Schneider M.P.C."/>
            <person name="Seuanez H.N."/>
            <person name="Silva A.M.R."/>
            <person name="da Silva A.L.C."/>
            <person name="Silva D.W."/>
            <person name="Silva R."/>
            <person name="Simoes I.C."/>
            <person name="Simon D."/>
            <person name="Soares C.M.A."/>
            <person name="Soares R.B.A."/>
            <person name="Souza E.M."/>
            <person name="Souza K.R.L."/>
            <person name="Souza R.C."/>
            <person name="Steffens M.B.R."/>
            <person name="Steindel M."/>
            <person name="Teixeira S.R."/>
            <person name="Urmenyi T."/>
            <person name="Vettore A."/>
            <person name="Wassem R."/>
            <person name="Zaha A."/>
            <person name="Simpson A.J.G."/>
        </authorList>
    </citation>
    <scope>NUCLEOTIDE SEQUENCE [LARGE SCALE GENOMIC DNA]</scope>
    <source>
        <strain>ATCC 12472 / DSM 30191 / JCM 1249 / CCUG 213 / NBRC 12614 / NCIMB 9131 / NCTC 9757 / MK</strain>
    </source>
</reference>
<gene>
    <name evidence="1" type="primary">fabH</name>
    <name type="ordered locus">CV_3416</name>
</gene>
<comment type="function">
    <text evidence="1">Catalyzes the condensation reaction of fatty acid synthesis by the addition to an acyl acceptor of two carbons from malonyl-ACP. Catalyzes the first condensation reaction which initiates fatty acid synthesis and may therefore play a role in governing the total rate of fatty acid production. Possesses both acetoacetyl-ACP synthase and acetyl transacylase activities. Its substrate specificity determines the biosynthesis of branched-chain and/or straight-chain of fatty acids.</text>
</comment>
<comment type="catalytic activity">
    <reaction evidence="1">
        <text>malonyl-[ACP] + acetyl-CoA + H(+) = 3-oxobutanoyl-[ACP] + CO2 + CoA</text>
        <dbReference type="Rhea" id="RHEA:12080"/>
        <dbReference type="Rhea" id="RHEA-COMP:9623"/>
        <dbReference type="Rhea" id="RHEA-COMP:9625"/>
        <dbReference type="ChEBI" id="CHEBI:15378"/>
        <dbReference type="ChEBI" id="CHEBI:16526"/>
        <dbReference type="ChEBI" id="CHEBI:57287"/>
        <dbReference type="ChEBI" id="CHEBI:57288"/>
        <dbReference type="ChEBI" id="CHEBI:78449"/>
        <dbReference type="ChEBI" id="CHEBI:78450"/>
        <dbReference type="EC" id="2.3.1.180"/>
    </reaction>
</comment>
<comment type="pathway">
    <text evidence="1">Lipid metabolism; fatty acid biosynthesis.</text>
</comment>
<comment type="subunit">
    <text evidence="1">Homodimer.</text>
</comment>
<comment type="subcellular location">
    <subcellularLocation>
        <location evidence="1">Cytoplasm</location>
    </subcellularLocation>
</comment>
<comment type="domain">
    <text evidence="1">The last Arg residue of the ACP-binding site is essential for the weak association between ACP/AcpP and FabH.</text>
</comment>
<comment type="similarity">
    <text evidence="1">Belongs to the thiolase-like superfamily. FabH family.</text>
</comment>
<name>FABH_CHRVO</name>